<gene>
    <name type="primary">retreg3</name>
    <name type="synonym">fam134c</name>
    <name type="ORF">TNeu105l15.1</name>
</gene>
<dbReference type="EMBL" id="CR760241">
    <property type="protein sequence ID" value="CAL49403.1"/>
    <property type="molecule type" value="mRNA"/>
</dbReference>
<dbReference type="EMBL" id="BC121834">
    <property type="protein sequence ID" value="AAI21835.1"/>
    <property type="molecule type" value="mRNA"/>
</dbReference>
<dbReference type="RefSeq" id="NP_001016672.2">
    <property type="nucleotide sequence ID" value="NM_001016672.3"/>
</dbReference>
<dbReference type="RefSeq" id="XP_012809972.2">
    <property type="nucleotide sequence ID" value="XM_012954518.3"/>
</dbReference>
<dbReference type="FunCoup" id="Q0P4Z1">
    <property type="interactions" value="1157"/>
</dbReference>
<dbReference type="STRING" id="8364.ENSXETP00000027559"/>
<dbReference type="PaxDb" id="8364-ENSXETP00000032571"/>
<dbReference type="DNASU" id="549426"/>
<dbReference type="GeneID" id="549426"/>
<dbReference type="KEGG" id="xtr:549426"/>
<dbReference type="AGR" id="Xenbase:XB-GENE-5719860"/>
<dbReference type="CTD" id="162427"/>
<dbReference type="Xenbase" id="XB-GENE-5719860">
    <property type="gene designation" value="retreg3"/>
</dbReference>
<dbReference type="eggNOG" id="ENOG502QPTN">
    <property type="taxonomic scope" value="Eukaryota"/>
</dbReference>
<dbReference type="InParanoid" id="Q0P4Z1"/>
<dbReference type="OMA" id="HRVFQHV"/>
<dbReference type="OrthoDB" id="10029527at2759"/>
<dbReference type="Proteomes" id="UP000008143">
    <property type="component" value="Chromosome 10"/>
</dbReference>
<dbReference type="Bgee" id="ENSXETG00000014893">
    <property type="expression patterns" value="Expressed in skeletal muscle tissue and 14 other cell types or tissues"/>
</dbReference>
<dbReference type="GO" id="GO:0005789">
    <property type="term" value="C:endoplasmic reticulum membrane"/>
    <property type="evidence" value="ECO:0007669"/>
    <property type="project" value="UniProtKB-SubCell"/>
</dbReference>
<dbReference type="GO" id="GO:0071782">
    <property type="term" value="C:endoplasmic reticulum tubular network"/>
    <property type="evidence" value="ECO:0000250"/>
    <property type="project" value="UniProtKB"/>
</dbReference>
<dbReference type="GO" id="GO:0071786">
    <property type="term" value="P:endoplasmic reticulum tubular network organization"/>
    <property type="evidence" value="ECO:0000250"/>
    <property type="project" value="UniProtKB"/>
</dbReference>
<dbReference type="GO" id="GO:0061709">
    <property type="term" value="P:reticulophagy"/>
    <property type="evidence" value="ECO:0000250"/>
    <property type="project" value="UniProtKB"/>
</dbReference>
<dbReference type="CDD" id="cd22562">
    <property type="entry name" value="RETR3_RHD"/>
    <property type="match status" value="1"/>
</dbReference>
<dbReference type="InterPro" id="IPR055258">
    <property type="entry name" value="RETR3_RHD"/>
</dbReference>
<dbReference type="InterPro" id="IPR043384">
    <property type="entry name" value="RETREG1/3"/>
</dbReference>
<dbReference type="PANTHER" id="PTHR28659">
    <property type="entry name" value="RETICULON-LIKE PROTEIN"/>
    <property type="match status" value="1"/>
</dbReference>
<dbReference type="PANTHER" id="PTHR28659:SF1">
    <property type="entry name" value="RETICULOPHAGY REGULATOR 3"/>
    <property type="match status" value="1"/>
</dbReference>
<dbReference type="Pfam" id="PF24456">
    <property type="entry name" value="RHD_RETREG1-3"/>
    <property type="match status" value="1"/>
</dbReference>
<organism>
    <name type="scientific">Xenopus tropicalis</name>
    <name type="common">Western clawed frog</name>
    <name type="synonym">Silurana tropicalis</name>
    <dbReference type="NCBI Taxonomy" id="8364"/>
    <lineage>
        <taxon>Eukaryota</taxon>
        <taxon>Metazoa</taxon>
        <taxon>Chordata</taxon>
        <taxon>Craniata</taxon>
        <taxon>Vertebrata</taxon>
        <taxon>Euteleostomi</taxon>
        <taxon>Amphibia</taxon>
        <taxon>Batrachia</taxon>
        <taxon>Anura</taxon>
        <taxon>Pipoidea</taxon>
        <taxon>Pipidae</taxon>
        <taxon>Xenopodinae</taxon>
        <taxon>Xenopus</taxon>
        <taxon>Silurana</taxon>
    </lineage>
</organism>
<reference key="1">
    <citation type="submission" date="2006-10" db="EMBL/GenBank/DDBJ databases">
        <authorList>
            <consortium name="Sanger Xenopus tropicalis EST/cDNA project"/>
        </authorList>
    </citation>
    <scope>NUCLEOTIDE SEQUENCE [LARGE SCALE MRNA]</scope>
    <source>
        <tissue>Neurula</tissue>
    </source>
</reference>
<reference key="2">
    <citation type="submission" date="2006-08" db="EMBL/GenBank/DDBJ databases">
        <authorList>
            <consortium name="NIH - Xenopus Gene Collection (XGC) project"/>
        </authorList>
    </citation>
    <scope>NUCLEOTIDE SEQUENCE [LARGE SCALE MRNA]</scope>
    <source>
        <tissue>Brain</tissue>
    </source>
</reference>
<accession>Q0P4Z1</accession>
<accession>Q07G99</accession>
<protein>
    <recommendedName>
        <fullName>Reticulophagy regulator 3</fullName>
    </recommendedName>
</protein>
<sequence>MAQRVGEEEQGASGLRRRRSGARCVEARERDEQVREVQEMLQRGLSSYEPVLSYVQAVLVWERPRHSALLHLALNAAFWFFALTSLRIIFLVAFGLMIIICADQWKNKLWPELGAARASELENESWGYVHPRLLSVPELCYHAADTWVSVYNFLRNLLLFKTENPGKFCLLACSFLTFLAVLGGYIPGVVLSYLLLLFLLLWPLAIYHQLGRRIYQKLEPALQRLDFSVRGYMMSKYKERQKHNRALPPTDASDSEEELAAFCPSLDDSAVAKELTISDSEHSDAEVSFTENGTFNLSRGQTPLTEGSEDLDRHSDPEESFARDLPDFPSINPDATGIEDDDETSIGIPSTALHPQFSSRQLYEEQESLDAELSLGGFPSTQNITENIAGFVTRGMIQLALAGASQQTHAYAESPRAKQYQRNSSSELDTDAEADDFELLDQSELSQMDPSSSHSHQ</sequence>
<feature type="chain" id="PRO_0000288471" description="Reticulophagy regulator 3">
    <location>
        <begin position="1"/>
        <end position="457"/>
    </location>
</feature>
<feature type="transmembrane region" description="Helical" evidence="3">
    <location>
        <begin position="80"/>
        <end position="100"/>
    </location>
</feature>
<feature type="transmembrane region" description="Helical" evidence="3">
    <location>
        <begin position="165"/>
        <end position="185"/>
    </location>
</feature>
<feature type="transmembrane region" description="Helical" evidence="3">
    <location>
        <begin position="186"/>
        <end position="206"/>
    </location>
</feature>
<feature type="region of interest" description="Disordered" evidence="4">
    <location>
        <begin position="1"/>
        <end position="24"/>
    </location>
</feature>
<feature type="region of interest" description="Disordered" evidence="4">
    <location>
        <begin position="291"/>
        <end position="351"/>
    </location>
</feature>
<feature type="region of interest" description="Disordered" evidence="4">
    <location>
        <begin position="410"/>
        <end position="457"/>
    </location>
</feature>
<feature type="short sequence motif" description="LIR motif" evidence="2">
    <location>
        <begin position="435"/>
        <end position="440"/>
    </location>
</feature>
<feature type="compositionally biased region" description="Polar residues" evidence="4">
    <location>
        <begin position="291"/>
        <end position="305"/>
    </location>
</feature>
<feature type="compositionally biased region" description="Basic and acidic residues" evidence="4">
    <location>
        <begin position="310"/>
        <end position="326"/>
    </location>
</feature>
<feature type="compositionally biased region" description="Acidic residues" evidence="4">
    <location>
        <begin position="428"/>
        <end position="441"/>
    </location>
</feature>
<feature type="compositionally biased region" description="Polar residues" evidence="4">
    <location>
        <begin position="443"/>
        <end position="457"/>
    </location>
</feature>
<feature type="sequence conflict" description="In Ref. 1; CAL49403." evidence="5" ref="1">
    <original>Q</original>
    <variation>R</variation>
    <location>
        <position position="421"/>
    </location>
</feature>
<proteinExistence type="evidence at transcript level"/>
<name>RETR3_XENTR</name>
<keyword id="KW-0072">Autophagy</keyword>
<keyword id="KW-0256">Endoplasmic reticulum</keyword>
<keyword id="KW-0472">Membrane</keyword>
<keyword id="KW-0597">Phosphoprotein</keyword>
<keyword id="KW-1185">Reference proteome</keyword>
<keyword id="KW-0812">Transmembrane</keyword>
<keyword id="KW-1133">Transmembrane helix</keyword>
<comment type="function">
    <text evidence="1">Endoplasmic reticulum (ER)-anchored autophagy regulator which exists in an inactive state under basal conditions but is activated following cellular stress. When activated, induces ER fragmentation and mediates ER delivery into lysosomes through sequestration into autophagosomes via interaction with ATG8 family proteins. Promotes ER membrane curvature and ER tubulation required for subsequent ER fragmentation and engulfment into autophagosomes.</text>
</comment>
<comment type="subunit">
    <text evidence="1">Interacts with ATG8 family modifier proteins.</text>
</comment>
<comment type="subcellular location">
    <subcellularLocation>
        <location evidence="1">Endoplasmic reticulum membrane</location>
        <topology evidence="3">Multi-pass membrane protein</topology>
    </subcellularLocation>
</comment>
<comment type="domain">
    <text evidence="1">The LIR motif interacts with ATG8 family proteins.</text>
</comment>
<comment type="similarity">
    <text evidence="5">Belongs to the RETREG family.</text>
</comment>
<evidence type="ECO:0000250" key="1">
    <source>
        <dbReference type="UniProtKB" id="Q86VR2"/>
    </source>
</evidence>
<evidence type="ECO:0000250" key="2">
    <source>
        <dbReference type="UniProtKB" id="Q9H6L5"/>
    </source>
</evidence>
<evidence type="ECO:0000255" key="3"/>
<evidence type="ECO:0000256" key="4">
    <source>
        <dbReference type="SAM" id="MobiDB-lite"/>
    </source>
</evidence>
<evidence type="ECO:0000305" key="5"/>